<gene>
    <name type="primary">Nrxn1</name>
    <name type="synonym">Kiaa0578</name>
</gene>
<reference key="1">
    <citation type="journal article" date="2002" name="DNA Res.">
        <title>Prediction of the coding sequences of mouse homologues of KIAA gene: I. The complete nucleotide sequences of 100 mouse KIAA-homologous cDNAs identified by screening of terminal sequences of cDNA clones randomly sampled from size-fractionated libraries.</title>
        <authorList>
            <person name="Okazaki N."/>
            <person name="Kikuno R."/>
            <person name="Ohara R."/>
            <person name="Inamoto S."/>
            <person name="Hara Y."/>
            <person name="Nagase T."/>
            <person name="Ohara O."/>
            <person name="Koga H."/>
        </authorList>
    </citation>
    <scope>NUCLEOTIDE SEQUENCE [LARGE SCALE MRNA] (ISOFORM 2A)</scope>
    <source>
        <tissue>Brain</tissue>
    </source>
</reference>
<reference key="2">
    <citation type="submission" date="2003-02" db="EMBL/GenBank/DDBJ databases">
        <authorList>
            <person name="Okazaki N."/>
            <person name="Kikuno R."/>
            <person name="Nagase T."/>
            <person name="Ohara O."/>
            <person name="Koga H."/>
        </authorList>
    </citation>
    <scope>SEQUENCE REVISION</scope>
</reference>
<reference key="3">
    <citation type="journal article" date="2009" name="PLoS Biol.">
        <title>Lineage-specific biology revealed by a finished genome assembly of the mouse.</title>
        <authorList>
            <person name="Church D.M."/>
            <person name="Goodstadt L."/>
            <person name="Hillier L.W."/>
            <person name="Zody M.C."/>
            <person name="Goldstein S."/>
            <person name="She X."/>
            <person name="Bult C.J."/>
            <person name="Agarwala R."/>
            <person name="Cherry J.L."/>
            <person name="DiCuccio M."/>
            <person name="Hlavina W."/>
            <person name="Kapustin Y."/>
            <person name="Meric P."/>
            <person name="Maglott D."/>
            <person name="Birtle Z."/>
            <person name="Marques A.C."/>
            <person name="Graves T."/>
            <person name="Zhou S."/>
            <person name="Teague B."/>
            <person name="Potamousis K."/>
            <person name="Churas C."/>
            <person name="Place M."/>
            <person name="Herschleb J."/>
            <person name="Runnheim R."/>
            <person name="Forrest D."/>
            <person name="Amos-Landgraf J."/>
            <person name="Schwartz D.C."/>
            <person name="Cheng Z."/>
            <person name="Lindblad-Toh K."/>
            <person name="Eichler E.E."/>
            <person name="Ponting C.P."/>
        </authorList>
    </citation>
    <scope>NUCLEOTIDE SEQUENCE [LARGE SCALE GENOMIC DNA]</scope>
    <scope>ALTERNATIVE SPLICING</scope>
    <source>
        <strain>C57BL/6J</strain>
    </source>
</reference>
<reference key="4">
    <citation type="journal article" date="2004" name="Genome Res.">
        <title>The status, quality, and expansion of the NIH full-length cDNA project: the Mammalian Gene Collection (MGC).</title>
        <authorList>
            <consortium name="The MGC Project Team"/>
        </authorList>
    </citation>
    <scope>NUCLEOTIDE SEQUENCE [LARGE SCALE MRNA] OF 278-1514 (ISOFORM 4A)</scope>
    <source>
        <tissue>Eye</tissue>
    </source>
</reference>
<reference key="5">
    <citation type="submission" date="2001-05" db="EMBL/GenBank/DDBJ databases">
        <title>Sequencing of the neurexin genes.</title>
        <authorList>
            <person name="Graveley B.R."/>
            <person name="Philipps D.L."/>
        </authorList>
    </citation>
    <scope>NUCLEOTIDE SEQUENCE [GENOMIC DNA] OF 298-437 (ISOFORMS 1A; 2A AND 3A/4A)</scope>
    <source>
        <strain>CD-1</strain>
        <tissue>Brain</tissue>
    </source>
</reference>
<reference key="6">
    <citation type="journal article" date="2005" name="Science">
        <title>The transcriptional landscape of the mammalian genome.</title>
        <authorList>
            <person name="Carninci P."/>
            <person name="Kasukawa T."/>
            <person name="Katayama S."/>
            <person name="Gough J."/>
            <person name="Frith M.C."/>
            <person name="Maeda N."/>
            <person name="Oyama R."/>
            <person name="Ravasi T."/>
            <person name="Lenhard B."/>
            <person name="Wells C."/>
            <person name="Kodzius R."/>
            <person name="Shimokawa K."/>
            <person name="Bajic V.B."/>
            <person name="Brenner S.E."/>
            <person name="Batalov S."/>
            <person name="Forrest A.R."/>
            <person name="Zavolan M."/>
            <person name="Davis M.J."/>
            <person name="Wilming L.G."/>
            <person name="Aidinis V."/>
            <person name="Allen J.E."/>
            <person name="Ambesi-Impiombato A."/>
            <person name="Apweiler R."/>
            <person name="Aturaliya R.N."/>
            <person name="Bailey T.L."/>
            <person name="Bansal M."/>
            <person name="Baxter L."/>
            <person name="Beisel K.W."/>
            <person name="Bersano T."/>
            <person name="Bono H."/>
            <person name="Chalk A.M."/>
            <person name="Chiu K.P."/>
            <person name="Choudhary V."/>
            <person name="Christoffels A."/>
            <person name="Clutterbuck D.R."/>
            <person name="Crowe M.L."/>
            <person name="Dalla E."/>
            <person name="Dalrymple B.P."/>
            <person name="de Bono B."/>
            <person name="Della Gatta G."/>
            <person name="di Bernardo D."/>
            <person name="Down T."/>
            <person name="Engstrom P."/>
            <person name="Fagiolini M."/>
            <person name="Faulkner G."/>
            <person name="Fletcher C.F."/>
            <person name="Fukushima T."/>
            <person name="Furuno M."/>
            <person name="Futaki S."/>
            <person name="Gariboldi M."/>
            <person name="Georgii-Hemming P."/>
            <person name="Gingeras T.R."/>
            <person name="Gojobori T."/>
            <person name="Green R.E."/>
            <person name="Gustincich S."/>
            <person name="Harbers M."/>
            <person name="Hayashi Y."/>
            <person name="Hensch T.K."/>
            <person name="Hirokawa N."/>
            <person name="Hill D."/>
            <person name="Huminiecki L."/>
            <person name="Iacono M."/>
            <person name="Ikeo K."/>
            <person name="Iwama A."/>
            <person name="Ishikawa T."/>
            <person name="Jakt M."/>
            <person name="Kanapin A."/>
            <person name="Katoh M."/>
            <person name="Kawasawa Y."/>
            <person name="Kelso J."/>
            <person name="Kitamura H."/>
            <person name="Kitano H."/>
            <person name="Kollias G."/>
            <person name="Krishnan S.P."/>
            <person name="Kruger A."/>
            <person name="Kummerfeld S.K."/>
            <person name="Kurochkin I.V."/>
            <person name="Lareau L.F."/>
            <person name="Lazarevic D."/>
            <person name="Lipovich L."/>
            <person name="Liu J."/>
            <person name="Liuni S."/>
            <person name="McWilliam S."/>
            <person name="Madan Babu M."/>
            <person name="Madera M."/>
            <person name="Marchionni L."/>
            <person name="Matsuda H."/>
            <person name="Matsuzawa S."/>
            <person name="Miki H."/>
            <person name="Mignone F."/>
            <person name="Miyake S."/>
            <person name="Morris K."/>
            <person name="Mottagui-Tabar S."/>
            <person name="Mulder N."/>
            <person name="Nakano N."/>
            <person name="Nakauchi H."/>
            <person name="Ng P."/>
            <person name="Nilsson R."/>
            <person name="Nishiguchi S."/>
            <person name="Nishikawa S."/>
            <person name="Nori F."/>
            <person name="Ohara O."/>
            <person name="Okazaki Y."/>
            <person name="Orlando V."/>
            <person name="Pang K.C."/>
            <person name="Pavan W.J."/>
            <person name="Pavesi G."/>
            <person name="Pesole G."/>
            <person name="Petrovsky N."/>
            <person name="Piazza S."/>
            <person name="Reed J."/>
            <person name="Reid J.F."/>
            <person name="Ring B.Z."/>
            <person name="Ringwald M."/>
            <person name="Rost B."/>
            <person name="Ruan Y."/>
            <person name="Salzberg S.L."/>
            <person name="Sandelin A."/>
            <person name="Schneider C."/>
            <person name="Schoenbach C."/>
            <person name="Sekiguchi K."/>
            <person name="Semple C.A."/>
            <person name="Seno S."/>
            <person name="Sessa L."/>
            <person name="Sheng Y."/>
            <person name="Shibata Y."/>
            <person name="Shimada H."/>
            <person name="Shimada K."/>
            <person name="Silva D."/>
            <person name="Sinclair B."/>
            <person name="Sperling S."/>
            <person name="Stupka E."/>
            <person name="Sugiura K."/>
            <person name="Sultana R."/>
            <person name="Takenaka Y."/>
            <person name="Taki K."/>
            <person name="Tammoja K."/>
            <person name="Tan S.L."/>
            <person name="Tang S."/>
            <person name="Taylor M.S."/>
            <person name="Tegner J."/>
            <person name="Teichmann S.A."/>
            <person name="Ueda H.R."/>
            <person name="van Nimwegen E."/>
            <person name="Verardo R."/>
            <person name="Wei C.L."/>
            <person name="Yagi K."/>
            <person name="Yamanishi H."/>
            <person name="Zabarovsky E."/>
            <person name="Zhu S."/>
            <person name="Zimmer A."/>
            <person name="Hide W."/>
            <person name="Bult C."/>
            <person name="Grimmond S.M."/>
            <person name="Teasdale R.D."/>
            <person name="Liu E.T."/>
            <person name="Brusic V."/>
            <person name="Quackenbush J."/>
            <person name="Wahlestedt C."/>
            <person name="Mattick J.S."/>
            <person name="Hume D.A."/>
            <person name="Kai C."/>
            <person name="Sasaki D."/>
            <person name="Tomaru Y."/>
            <person name="Fukuda S."/>
            <person name="Kanamori-Katayama M."/>
            <person name="Suzuki M."/>
            <person name="Aoki J."/>
            <person name="Arakawa T."/>
            <person name="Iida J."/>
            <person name="Imamura K."/>
            <person name="Itoh M."/>
            <person name="Kato T."/>
            <person name="Kawaji H."/>
            <person name="Kawagashira N."/>
            <person name="Kawashima T."/>
            <person name="Kojima M."/>
            <person name="Kondo S."/>
            <person name="Konno H."/>
            <person name="Nakano K."/>
            <person name="Ninomiya N."/>
            <person name="Nishio T."/>
            <person name="Okada M."/>
            <person name="Plessy C."/>
            <person name="Shibata K."/>
            <person name="Shiraki T."/>
            <person name="Suzuki S."/>
            <person name="Tagami M."/>
            <person name="Waki K."/>
            <person name="Watahiki A."/>
            <person name="Okamura-Oho Y."/>
            <person name="Suzuki H."/>
            <person name="Kawai J."/>
            <person name="Hayashizaki Y."/>
        </authorList>
    </citation>
    <scope>NUCLEOTIDE SEQUENCE [LARGE SCALE MRNA] OF 1126-1514 (ISOFORMS 1A/2A/3A)</scope>
    <source>
        <strain>C57BL/6J</strain>
        <tissue>Embryo</tissue>
    </source>
</reference>
<reference key="7">
    <citation type="journal article" date="1999" name="Mol. Cell. Neurosci.">
        <title>Differential seizure-induced and developmental changes of neurexin expression.</title>
        <authorList>
            <person name="Gorecki D.C."/>
            <person name="Szklarczyk A."/>
            <person name="Lukasiuk K."/>
            <person name="Kaczmarek L."/>
            <person name="Simons J.P."/>
        </authorList>
    </citation>
    <scope>NUCLEOTIDE SEQUENCE [MRNA] OF 1463-1505 (ISOFORMS 1A/2A/3A/4A)</scope>
    <source>
        <strain>C57BL/10</strain>
        <tissue>Brain</tissue>
    </source>
</reference>
<reference key="8">
    <citation type="journal article" date="1998" name="J. Biol. Chem.">
        <title>Neurexin I alpha is a major alpha-latrotoxin receptor that cooperates in alpha-latrotoxin action.</title>
        <authorList>
            <person name="Geppert M."/>
            <person name="Khvotchev M."/>
            <person name="Krasnoperov V."/>
            <person name="Goda Y."/>
            <person name="Missler M."/>
            <person name="Hammer R.E."/>
            <person name="Ichtchenko K."/>
            <person name="Petrenko A.G."/>
            <person name="Sudhof T.C."/>
        </authorList>
    </citation>
    <scope>DISRUPTION PHENOTYPE</scope>
    <scope>FUNCTION</scope>
    <scope>CALCIUM-DEPENDENT INTERACTION WITH ALPHA-LATROTOXIN</scope>
</reference>
<reference key="9">
    <citation type="journal article" date="2001" name="Biochem. Biophys. Res. Commun.">
        <title>Synaptotagmin-like protein 1-3: a novel family of C-terminal-type tandem C2 proteins.</title>
        <authorList>
            <person name="Fukuda M."/>
            <person name="Mikoshiba K."/>
        </authorList>
    </citation>
    <scope>INTERACTION WITH SYTL1</scope>
</reference>
<reference key="10">
    <citation type="journal article" date="2001" name="Biochem. J.">
        <title>Characterization of KIAA1427 protein as an atypical synaptotagmin (Syt XIII).</title>
        <authorList>
            <person name="Fukuda M."/>
            <person name="Mikoshiba K."/>
        </authorList>
    </citation>
    <scope>INTERACTION WITH SYT13</scope>
</reference>
<reference key="11">
    <citation type="journal article" date="2003" name="Nature">
        <title>Alpha-neurexins couple Ca2+ channels to synaptic vesicle exocytosis.</title>
        <authorList>
            <person name="Missler M."/>
            <person name="Zhang W."/>
            <person name="Rohlmann A."/>
            <person name="Kattenstroth G."/>
            <person name="Hammer R.E."/>
            <person name="Gottmann K."/>
            <person name="Sudhof T.C."/>
        </authorList>
    </citation>
    <scope>DISRUPTION PHENOTYPE</scope>
    <scope>FUNCTION IN NEUROTRANSMITTER RELEASE</scope>
</reference>
<reference key="12">
    <citation type="journal article" date="2004" name="Proc. Natl. Acad. Sci. U.S.A.">
        <title>Postsynaptic N-methyl-D-aspartate receptor function requires alpha-neurexins.</title>
        <authorList>
            <person name="Kattenstroth G."/>
            <person name="Tantalaki E."/>
            <person name="Sudhof T.C."/>
            <person name="Gottmann K."/>
            <person name="Missler M."/>
        </authorList>
    </citation>
    <scope>DISRUPTION PHENOTYPE</scope>
    <scope>FUNCTION</scope>
</reference>
<reference key="13">
    <citation type="journal article" date="2006" name="J. Neurosci.">
        <title>Important contribution of alpha-neurexins to Ca2+-triggered exocytosis of secretory granules.</title>
        <authorList>
            <person name="Dudanova I."/>
            <person name="Sedej S."/>
            <person name="Ahmad M."/>
            <person name="Masius H."/>
            <person name="Sargsyan V."/>
            <person name="Zhang W."/>
            <person name="Riedel D."/>
            <person name="Angenstein F."/>
            <person name="Schild D."/>
            <person name="Rupnik M."/>
            <person name="Missler M."/>
        </authorList>
    </citation>
    <scope>DISRUPTION PHENOTYPE</scope>
    <scope>FUNCTION</scope>
</reference>
<reference key="14">
    <citation type="journal article" date="2006" name="Neuroscience">
        <title>alpha-Neurexins are required for efficient transmitter release and synaptic homeostasis at the mouse neuromuscular junction.</title>
        <authorList>
            <person name="Sons M.S."/>
            <person name="Busche N."/>
            <person name="Strenzke N."/>
            <person name="Moser T."/>
            <person name="Ernsberger U."/>
            <person name="Mooren F.C."/>
            <person name="Zhang W."/>
            <person name="Ahmad M."/>
            <person name="Steffens H."/>
            <person name="Schomburg E.D."/>
            <person name="Plomp J.J."/>
            <person name="Missler M."/>
        </authorList>
    </citation>
    <scope>DISRUPTION PHENOTYPE</scope>
    <scope>FUNCTION</scope>
</reference>
<reference key="15">
    <citation type="journal article" date="2007" name="J. Comp. Neurol.">
        <title>Deletion of alpha-neurexins does not cause a major impairment of axonal pathfinding or synapse formation.</title>
        <authorList>
            <person name="Dudanova I."/>
            <person name="Tabuchi K."/>
            <person name="Rohlmann A."/>
            <person name="Sudhof T.C."/>
            <person name="Missler M."/>
        </authorList>
    </citation>
    <scope>DISRUPTION PHENOTYPE</scope>
</reference>
<reference key="16">
    <citation type="journal article" date="2008" name="Proc. Natl. Acad. Sci. U.S.A.">
        <title>Unusually rapid evolution of neuroligin-4 in mice.</title>
        <authorList>
            <person name="Bolliger M.F."/>
            <person name="Pei J."/>
            <person name="Maxeiner S."/>
            <person name="Boucard A.A."/>
            <person name="Grishin N.V."/>
            <person name="Sudhof T.C."/>
        </authorList>
    </citation>
    <scope>INTERACTION WITH NLGN4L</scope>
</reference>
<reference key="17">
    <citation type="journal article" date="2009" name="Proc. Natl. Acad. Sci. U.S.A.">
        <title>Mouse neurexin-1alpha deletion causes correlated electrophysiological and behavioral changes consistent with cognitive impairments.</title>
        <authorList>
            <person name="Etherton M.R."/>
            <person name="Blaiss C.A."/>
            <person name="Powell C.M."/>
            <person name="Sudhof T.C."/>
        </authorList>
    </citation>
    <scope>DISRUPTION PHENOTYPE</scope>
</reference>
<reference key="18">
    <citation type="journal article" date="2010" name="Cell">
        <title>A tissue-specific atlas of mouse protein phosphorylation and expression.</title>
        <authorList>
            <person name="Huttlin E.L."/>
            <person name="Jedrychowski M.P."/>
            <person name="Elias J.E."/>
            <person name="Goswami T."/>
            <person name="Rad R."/>
            <person name="Beausoleil S.A."/>
            <person name="Villen J."/>
            <person name="Haas W."/>
            <person name="Sowa M.E."/>
            <person name="Gygi S.P."/>
        </authorList>
    </citation>
    <scope>IDENTIFICATION BY MASS SPECTROMETRY [LARGE SCALE ANALYSIS]</scope>
    <source>
        <tissue>Brain</tissue>
    </source>
</reference>
<reference key="19">
    <citation type="journal article" date="2011" name="Eur. J. Neurosci.">
        <title>Cbln family proteins promote synapse formation by regulating distinct neurexin signaling pathways in various brain regions.</title>
        <authorList>
            <person name="Matsuda K."/>
            <person name="Yuzaki M."/>
        </authorList>
    </citation>
    <scope>FUNCTION</scope>
    <scope>SUBCELLULAR LOCATION</scope>
    <scope>INTERACTION WITH CBLN1; CBLN2 AND CBLN4</scope>
</reference>
<reference key="20">
    <citation type="journal article" date="2013" name="Neuron">
        <title>The specific alpha-neurexin interactor calsyntenin-3 promotes excitatory and inhibitory synapse development.</title>
        <authorList>
            <person name="Pettem K.L."/>
            <person name="Yokomaku D."/>
            <person name="Luo L."/>
            <person name="Linhoff M.W."/>
            <person name="Prasad T."/>
            <person name="Connor S.A."/>
            <person name="Siddiqui T.J."/>
            <person name="Kawabe H."/>
            <person name="Chen F."/>
            <person name="Zhang L."/>
            <person name="Rudenko G."/>
            <person name="Wang Y.T."/>
            <person name="Brose N."/>
            <person name="Craig A.M."/>
        </authorList>
    </citation>
    <scope>INTERACTION WITH CLSTN3</scope>
</reference>
<reference key="21">
    <citation type="journal article" date="2014" name="Cell Rep.">
        <title>Calsyntenins function as synaptogenic adhesion molecules in concert with neurexins.</title>
        <authorList>
            <person name="Um J.W."/>
            <person name="Pramanik G."/>
            <person name="Ko J.S."/>
            <person name="Song M.Y."/>
            <person name="Lee D."/>
            <person name="Kim H."/>
            <person name="Park K.S."/>
            <person name="Suedhof T.C."/>
            <person name="Tabuchi K."/>
            <person name="Ko J."/>
        </authorList>
    </citation>
    <scope>INTERACTION WITH CLSTN3</scope>
</reference>
<reference key="22">
    <citation type="journal article" date="2014" name="Proc. Natl. Acad. Sci. U.S.A.">
        <title>Structure of Crumbs tail in complex with the PALS1 PDZ-SH3-GK tandem reveals a highly specific assembly mechanism for the apical Crumbs complex.</title>
        <authorList>
            <person name="Li Y."/>
            <person name="Wei Z."/>
            <person name="Yan Y."/>
            <person name="Wan Q."/>
            <person name="Du Q."/>
            <person name="Zhang M."/>
        </authorList>
    </citation>
    <scope>INTERACTION WITH CASK</scope>
</reference>
<reference key="23">
    <citation type="journal article" date="2015" name="Proc. Natl. Acad. Sci. U.S.A.">
        <title>Systematic discovery of regulated and conserved alternative exons in the mammalian brain reveals NMD modulating chromatin regulators.</title>
        <authorList>
            <person name="Yan Q."/>
            <person name="Weyn-Vanhentenryck S.M."/>
            <person name="Wu J."/>
            <person name="Sloan S.A."/>
            <person name="Zhang Y."/>
            <person name="Chen K."/>
            <person name="Wu J.Q."/>
            <person name="Barres B.A."/>
            <person name="Zhang C."/>
        </authorList>
    </citation>
    <scope>ALTERNATIVE PROMOTER USAGE (ISOFORM 6)</scope>
    <scope>ALTERNATIVE SPLICING</scope>
</reference>
<reference key="24">
    <citation type="journal article" date="2018" name="Cell">
        <title>Heparan Sulfate Organizes Neuronal Synapses through Neurexin Partnerships.</title>
        <authorList>
            <person name="Zhang P."/>
            <person name="Lu H."/>
            <person name="Peixoto R.T."/>
            <person name="Pines M.K."/>
            <person name="Ge Y."/>
            <person name="Oku S."/>
            <person name="Siddiqui T.J."/>
            <person name="Xie Y."/>
            <person name="Wu W."/>
            <person name="Archer-Hartmann S."/>
            <person name="Yoshida K."/>
            <person name="Tanaka K.F."/>
            <person name="Aricescu A.R."/>
            <person name="Azadi P."/>
            <person name="Gordon M.D."/>
            <person name="Sabatini B.L."/>
            <person name="Wong R.O.L."/>
            <person name="Craig A.M."/>
        </authorList>
    </citation>
    <scope>FUNCTION</scope>
    <scope>GLYCOSYLATION AT SER-1392</scope>
    <scope>MUTAGENESIS OF SER-1392</scope>
</reference>
<reference key="25">
    <citation type="journal article" date="2020" name="J. Biol. Chem.">
        <title>Calsyntenin-3 interacts with both alpha- and beta-neurexins in the regulation of excitatory synaptic innervation in specific Schaffer collateral pathways.</title>
        <authorList>
            <person name="Kim H."/>
            <person name="Kim D."/>
            <person name="Kim J."/>
            <person name="Lee H.Y."/>
            <person name="Park D."/>
            <person name="Kang H."/>
            <person name="Matsuda K."/>
            <person name="Sterky F.H."/>
            <person name="Yuzaki M."/>
            <person name="Kim J.Y."/>
            <person name="Choi S.Y."/>
            <person name="Ko J."/>
            <person name="Um J.W."/>
        </authorList>
    </citation>
    <scope>INTERACTION WITH CLSTN3</scope>
</reference>
<reference key="26">
    <citation type="journal article" date="2008" name="Structure">
        <title>Crystal structures of beta-neurexin 1 and beta-neurexin 2 ectodomains and dynamics of splice insertion sequence 4.</title>
        <authorList>
            <person name="Koehnke J."/>
            <person name="Jin X."/>
            <person name="Trbovic N."/>
            <person name="Katsamba P.S."/>
            <person name="Brasch J."/>
            <person name="Ahlsen G."/>
            <person name="Scheiffele P."/>
            <person name="Honig B."/>
            <person name="Palmer A.G. III"/>
            <person name="Shapiro L."/>
        </authorList>
    </citation>
    <scope>X-RAY CRYSTALLOGRAPHY (1.7 ANGSTROMS) OF 1132-1334 (ISOFORM 5A) IN COMPLEX WITH CALCIUM</scope>
    <scope>SUBUNIT</scope>
    <scope>INTERACTION WITH NLGN1 AND NLGN2</scope>
    <scope>ALTERNATIVE SPLICING</scope>
</reference>
<reference key="27">
    <citation type="journal article" date="2010" name="Neuron">
        <title>Splice form dependence of beta-neurexin/neuroligin binding interactions.</title>
        <authorList>
            <person name="Koehnke J."/>
            <person name="Katsamba P.S."/>
            <person name="Ahlsen G."/>
            <person name="Bahna F."/>
            <person name="Vendome J."/>
            <person name="Honig B."/>
            <person name="Shapiro L."/>
            <person name="Jin X."/>
        </authorList>
    </citation>
    <scope>X-RAY CRYSTALLOGRAPHY (2.69 ANGSTROMS) OF 1132-1334</scope>
    <scope>INTERACTION WITH NLGN1; NLGN2 AND NLGN3</scope>
</reference>
<name>NRX1A_MOUSE</name>
<comment type="function">
    <text evidence="9 10 11 12 18 22 24">Cell surface protein involved in cell-cell-interactions, exocytosis of secretory granules and regulation of signal transmission. Function is isoform-specific. Alpha-type isoforms have a long N-terminus with six laminin G-like domains and play an important role in synaptic signal transmission. Alpha-type isoforms play a role in the regulation of calcium channel activity and Ca(2+)-triggered neurotransmitter release at synapses and at neuromuscular junctions. They play an important role in Ca(2+)-triggered exocytosis of secretory granules in pituitary gland. They may affect their functions at synapses and in endocrine cells via their interactions with proteins from the exocytotic machinery. Likewise, alpha-type isoforms play a role in regulating the activity of postsynaptic NMDA receptors, a subtype of glutamate-gated ion channels. Both alpha-type and beta-type isoforms may play a role in the formation or maintenance of synaptic junctions via their interactions (via the extracellular domains) with neuroligin family members, CBLN1 or CBLN2. In vitro, triggers the de novo formation of presynaptic structures. May be involved in specification of excitatory synapses. Alpha-type isoforms were first identified as receptors for alpha-latrotoxin from spider venom.</text>
</comment>
<comment type="subunit">
    <text evidence="1 2 7 8 14 15 17 18 19 20 21 23">Interacts (via laminin G-like domain 2 and/or laminin G-like domain 6) with NLGN1 forming a heterotetramer, where one NLGN1 dimer interacts with one NRXN1 dimer (PubMed:18334216, PubMed:20624592). Also interacts (via laminin G-like domain 2 and/or laminin G-like domain 6) with NLGN2, NLGN3 and NLGN4L; interactions with NLGN1, NLGN2, NLGN3 and NLGN4L are calcium-dependent (PubMed:18434543, PubMed:20624592). Interacts (via cytoplasmic C-terminal region) with CASK (via the PDZ, SH3 and guanylate kinase-like domains) (PubMed:25385611). Interacts (via cytoplasmic C-terminus) with CASKIN1 and APBA1 (By similarity). Interacts (via laminin G-like domain 2) with NXPH1 and NXPH3 (By similarity). Alpha-type isoforms (neurexin-1-alpha) interact (via laminin G-like domain 2 and/or laminin G-like domain 6) with DAG1 (via alpha-dystroglycan chain) (By similarity). Interacts with LRRTM1, LRRTM2, LRRTM3 and LRRTM4 (By similarity). Interacts with SYT13 and SYTL1 (PubMed:11171101, PubMed:11243866). Interacts with CBLN1, CBLN2 and, less avidly, with CBLN4 (PubMed:21410790). Interacts with CLSTN3 (PubMed:24094106, PubMed:24613359, PubMed:32434929).</text>
</comment>
<comment type="interaction">
    <interactant intactId="EBI-399696">
        <id>Q9CS84</id>
    </interactant>
    <interactant intactId="EBI-728180">
        <id>O14522</id>
        <label>PTPRT</label>
    </interactant>
    <organismsDiffer>true</organismsDiffer>
    <experiments>2</experiments>
</comment>
<comment type="subcellular location">
    <subcellularLocation>
        <location evidence="18">Presynaptic cell membrane</location>
        <topology evidence="18">Single-pass type I membrane protein</topology>
    </subcellularLocation>
</comment>
<comment type="alternative products">
    <event type="alternative promoter"/>
    <event type="alternative splicing"/>
    <isoform>
        <id>Q9CS84-1</id>
        <name>1a</name>
        <sequence type="displayed"/>
    </isoform>
    <isoform>
        <id>Q9CS84-2</id>
        <name>2a</name>
        <name>Alpha-2B</name>
        <sequence type="described" ref="VSP_003484"/>
    </isoform>
    <isoform>
        <id>Q9CS84-3</id>
        <name>3a</name>
        <name>Alpha-2C</name>
        <sequence type="described" ref="VSP_003485"/>
    </isoform>
    <isoform>
        <id>Q9CS84-4</id>
        <name>4a</name>
        <sequence type="described" ref="VSP_003485 VSP_016401"/>
    </isoform>
    <isoform>
        <id>P0DI97-1</id>
        <name>1b</name>
        <sequence type="external"/>
    </isoform>
    <isoform>
        <id>Q9CS84-5</id>
        <name>5a</name>
        <sequence type="described" ref="VSP_003484 VSP_043946"/>
    </isoform>
    <isoform>
        <id>Q9CS84-6</id>
        <name>6</name>
        <sequence type="described" ref="VSP_058203 VSP_058204 VSP_016401"/>
    </isoform>
    <text>A number of isoforms, alpha-type and beta-type are produced by alternative promoter usage. Beta-type isoforms differ from alpha-type isoforms in their N-terminus.</text>
</comment>
<comment type="PTM">
    <text evidence="22">O-glycosylated; contains heparan sulfate. Heparan sulfate attachment is required for synapse development by mediating interactions with neuroligins and LRRTM2.</text>
</comment>
<comment type="disruption phenotype">
    <text evidence="9 10 11 12 13 16 24">No visible phenotype, but mice display subtle behavorial deficits. Females show deficits in nest building and taking care of pups. Mice lacking the alpha-type isoforms of NRXN1, NRXN2 and NRXN3 are born at the expected Mendelian rate, but die during the first day after birth, probably due to neurological defects in the brainstem that impair normal breathing. These mice express normal levels of the beta-type isoforms of NRXN1, NRXN2 and NRXN3. Mice show reduced density of synapses in the brainstem, especially a reduction in the numbers of GABA-releasing synapses. Their brains display a reduced frequency of spontaneous neurotransmitter release, and decreased neurotransmitter release in response to an action potential. Likewise, the activity of voltage-gated calcium channels is strongly decreased. A small proportion (5-10%) of mice lacking the alpha-type isoforms of both NRXN1 and NRXN2 survive to adulthood; these mice do not show any gross anatomical defects in their brains or changes in the distribution of synaptic proteins, but they have fewer synapses in the neocortex and show defects in neurotransmitter release at neuromuscular junctions.</text>
</comment>
<comment type="miscellaneous">
    <molecule>Isoform 6</molecule>
    <text evidence="27">Produced by alternative promoter usage and alternative splicing.</text>
</comment>
<comment type="similarity">
    <text evidence="29">Belongs to the neurexin family.</text>
</comment>
<comment type="sequence caution" evidence="29">
    <conflict type="miscellaneous discrepancy">
        <sequence resource="EMBL-CDS" id="AAH47146"/>
    </conflict>
    <text>Contaminating sequence. Sequence of unknown origin in the N-terminal part.</text>
</comment>
<comment type="sequence caution" evidence="29">
    <conflict type="erroneous initiation">
        <sequence resource="EMBL-CDS" id="BAC41433"/>
    </conflict>
    <text>Extended N-terminus.</text>
</comment>
<accession>Q9CS84</accession>
<accession>G3UWZ9</accession>
<accession>O88722</accession>
<accession>Q80Y87</accession>
<accession>Q8CHE6</accession>
<organism>
    <name type="scientific">Mus musculus</name>
    <name type="common">Mouse</name>
    <dbReference type="NCBI Taxonomy" id="10090"/>
    <lineage>
        <taxon>Eukaryota</taxon>
        <taxon>Metazoa</taxon>
        <taxon>Chordata</taxon>
        <taxon>Craniata</taxon>
        <taxon>Vertebrata</taxon>
        <taxon>Euteleostomi</taxon>
        <taxon>Mammalia</taxon>
        <taxon>Eutheria</taxon>
        <taxon>Euarchontoglires</taxon>
        <taxon>Glires</taxon>
        <taxon>Rodentia</taxon>
        <taxon>Myomorpha</taxon>
        <taxon>Muroidea</taxon>
        <taxon>Muridae</taxon>
        <taxon>Murinae</taxon>
        <taxon>Mus</taxon>
        <taxon>Mus</taxon>
    </lineage>
</organism>
<evidence type="ECO:0000250" key="1">
    <source>
        <dbReference type="UniProtKB" id="Q28146"/>
    </source>
</evidence>
<evidence type="ECO:0000250" key="2">
    <source>
        <dbReference type="UniProtKB" id="Q63372"/>
    </source>
</evidence>
<evidence type="ECO:0000255" key="3"/>
<evidence type="ECO:0000255" key="4">
    <source>
        <dbReference type="PROSITE-ProRule" id="PRU00076"/>
    </source>
</evidence>
<evidence type="ECO:0000255" key="5">
    <source>
        <dbReference type="PROSITE-ProRule" id="PRU00122"/>
    </source>
</evidence>
<evidence type="ECO:0000256" key="6">
    <source>
        <dbReference type="SAM" id="MobiDB-lite"/>
    </source>
</evidence>
<evidence type="ECO:0000269" key="7">
    <source>
    </source>
</evidence>
<evidence type="ECO:0000269" key="8">
    <source>
    </source>
</evidence>
<evidence type="ECO:0000269" key="9">
    <source>
    </source>
</evidence>
<evidence type="ECO:0000269" key="10">
    <source>
    </source>
</evidence>
<evidence type="ECO:0000269" key="11">
    <source>
    </source>
</evidence>
<evidence type="ECO:0000269" key="12">
    <source>
    </source>
</evidence>
<evidence type="ECO:0000269" key="13">
    <source>
    </source>
</evidence>
<evidence type="ECO:0000269" key="14">
    <source>
    </source>
</evidence>
<evidence type="ECO:0000269" key="15">
    <source>
    </source>
</evidence>
<evidence type="ECO:0000269" key="16">
    <source>
    </source>
</evidence>
<evidence type="ECO:0000269" key="17">
    <source>
    </source>
</evidence>
<evidence type="ECO:0000269" key="18">
    <source>
    </source>
</evidence>
<evidence type="ECO:0000269" key="19">
    <source>
    </source>
</evidence>
<evidence type="ECO:0000269" key="20">
    <source>
    </source>
</evidence>
<evidence type="ECO:0000269" key="21">
    <source>
    </source>
</evidence>
<evidence type="ECO:0000269" key="22">
    <source>
    </source>
</evidence>
<evidence type="ECO:0000269" key="23">
    <source>
    </source>
</evidence>
<evidence type="ECO:0000269" key="24">
    <source>
    </source>
</evidence>
<evidence type="ECO:0000303" key="25">
    <source>
    </source>
</evidence>
<evidence type="ECO:0000303" key="26">
    <source>
    </source>
</evidence>
<evidence type="ECO:0000303" key="27">
    <source>
    </source>
</evidence>
<evidence type="ECO:0000303" key="28">
    <source ref="5"/>
</evidence>
<evidence type="ECO:0000305" key="29"/>
<evidence type="ECO:0007829" key="30">
    <source>
        <dbReference type="PDB" id="3BOD"/>
    </source>
</evidence>
<evidence type="ECO:0007829" key="31">
    <source>
        <dbReference type="PDB" id="3MW2"/>
    </source>
</evidence>
<evidence type="ECO:0007829" key="32">
    <source>
        <dbReference type="PDB" id="6PNP"/>
    </source>
</evidence>
<evidence type="ECO:0007829" key="33">
    <source>
        <dbReference type="PDB" id="6PNQ"/>
    </source>
</evidence>
<feature type="signal peptide" evidence="3">
    <location>
        <begin position="1"/>
        <end position="30"/>
    </location>
</feature>
<feature type="chain" id="PRO_0000043164" description="Neurexin-1">
    <location>
        <begin position="31"/>
        <end position="1514"/>
    </location>
</feature>
<feature type="topological domain" description="Extracellular" evidence="3">
    <location>
        <begin position="31"/>
        <end position="1438"/>
    </location>
</feature>
<feature type="transmembrane region" description="Helical" evidence="3">
    <location>
        <begin position="1439"/>
        <end position="1459"/>
    </location>
</feature>
<feature type="topological domain" description="Cytoplasmic" evidence="3">
    <location>
        <begin position="1460"/>
        <end position="1514"/>
    </location>
</feature>
<feature type="domain" description="Laminin G-like 1" evidence="5">
    <location>
        <begin position="31"/>
        <end position="217"/>
    </location>
</feature>
<feature type="domain" description="EGF-like 1" evidence="4">
    <location>
        <begin position="219"/>
        <end position="256"/>
    </location>
</feature>
<feature type="domain" description="Laminin G-like 2" evidence="5">
    <location>
        <begin position="283"/>
        <end position="480"/>
    </location>
</feature>
<feature type="domain" description="Laminin G-like 3" evidence="5">
    <location>
        <begin position="487"/>
        <end position="679"/>
    </location>
</feature>
<feature type="domain" description="EGF-like 2" evidence="4">
    <location>
        <begin position="683"/>
        <end position="720"/>
    </location>
</feature>
<feature type="domain" description="Laminin G-like 4" evidence="5">
    <location>
        <begin position="725"/>
        <end position="898"/>
    </location>
</feature>
<feature type="domain" description="Laminin G-like 5" evidence="5">
    <location>
        <begin position="912"/>
        <end position="1087"/>
    </location>
</feature>
<feature type="domain" description="EGF-like 3" evidence="4">
    <location>
        <begin position="1090"/>
        <end position="1127"/>
    </location>
</feature>
<feature type="domain" description="Laminin G-like 6" evidence="5">
    <location>
        <begin position="1133"/>
        <end position="1331"/>
    </location>
</feature>
<feature type="region of interest" description="Disordered" evidence="6">
    <location>
        <begin position="197"/>
        <end position="221"/>
    </location>
</feature>
<feature type="region of interest" description="Disordered" evidence="6">
    <location>
        <begin position="1396"/>
        <end position="1427"/>
    </location>
</feature>
<feature type="region of interest" description="Disordered" evidence="6">
    <location>
        <begin position="1481"/>
        <end position="1514"/>
    </location>
</feature>
<feature type="region of interest" description="Interaction with CASK" evidence="21">
    <location>
        <begin position="1481"/>
        <end position="1507"/>
    </location>
</feature>
<feature type="binding site" evidence="1">
    <location>
        <position position="329"/>
    </location>
    <ligand>
        <name>Ca(2+)</name>
        <dbReference type="ChEBI" id="CHEBI:29108"/>
        <label>1</label>
    </ligand>
</feature>
<feature type="binding site" evidence="1">
    <location>
        <position position="346"/>
    </location>
    <ligand>
        <name>Ca(2+)</name>
        <dbReference type="ChEBI" id="CHEBI:29108"/>
        <label>1</label>
    </ligand>
</feature>
<feature type="binding site" evidence="1">
    <location>
        <position position="414"/>
    </location>
    <ligand>
        <name>Ca(2+)</name>
        <dbReference type="ChEBI" id="CHEBI:29108"/>
        <label>1</label>
    </ligand>
</feature>
<feature type="binding site" evidence="1">
    <location>
        <position position="772"/>
    </location>
    <ligand>
        <name>Ca(2+)</name>
        <dbReference type="ChEBI" id="CHEBI:29108"/>
        <label>2</label>
    </ligand>
</feature>
<feature type="binding site" evidence="1">
    <location>
        <position position="789"/>
    </location>
    <ligand>
        <name>Ca(2+)</name>
        <dbReference type="ChEBI" id="CHEBI:29108"/>
        <label>2</label>
    </ligand>
</feature>
<feature type="binding site" evidence="1">
    <location>
        <position position="848"/>
    </location>
    <ligand>
        <name>Ca(2+)</name>
        <dbReference type="ChEBI" id="CHEBI:29108"/>
        <label>2</label>
    </ligand>
</feature>
<feature type="binding site" evidence="14">
    <location>
        <position position="1183"/>
    </location>
    <ligand>
        <name>Ca(2+)</name>
        <dbReference type="ChEBI" id="CHEBI:29108"/>
        <label>3</label>
    </ligand>
</feature>
<feature type="binding site" evidence="14">
    <location>
        <position position="1200"/>
    </location>
    <ligand>
        <name>Ca(2+)</name>
        <dbReference type="ChEBI" id="CHEBI:29108"/>
        <label>3</label>
    </ligand>
</feature>
<feature type="binding site" evidence="14">
    <location>
        <position position="1282"/>
    </location>
    <ligand>
        <name>Ca(2+)</name>
        <dbReference type="ChEBI" id="CHEBI:29108"/>
        <label>3</label>
    </ligand>
</feature>
<feature type="binding site" evidence="14">
    <location>
        <position position="1284"/>
    </location>
    <ligand>
        <name>Ca(2+)</name>
        <dbReference type="ChEBI" id="CHEBI:29108"/>
        <label>3</label>
    </ligand>
</feature>
<feature type="glycosylation site" description="N-linked (GlcNAc...) asparagine" evidence="3">
    <location>
        <position position="125"/>
    </location>
</feature>
<feature type="glycosylation site" description="N-linked (GlcNAc...) asparagine" evidence="3">
    <location>
        <position position="190"/>
    </location>
</feature>
<feature type="glycosylation site" description="N-linked (GlcNAc...) asparagine" evidence="3">
    <location>
        <position position="797"/>
    </location>
</feature>
<feature type="glycosylation site" description="N-linked (GlcNAc...) asparagine" evidence="3">
    <location>
        <position position="1230"/>
    </location>
</feature>
<feature type="glycosylation site" description="O-linked (Xyl...) (heparan sulfate) serine" evidence="22">
    <location>
        <position position="1392"/>
    </location>
</feature>
<feature type="disulfide bond" evidence="4">
    <location>
        <begin position="228"/>
        <end position="243"/>
    </location>
</feature>
<feature type="disulfide bond" evidence="4">
    <location>
        <begin position="245"/>
        <end position="255"/>
    </location>
</feature>
<feature type="disulfide bond" evidence="1">
    <location>
        <begin position="444"/>
        <end position="480"/>
    </location>
</feature>
<feature type="disulfide bond" evidence="1">
    <location>
        <begin position="650"/>
        <end position="679"/>
    </location>
</feature>
<feature type="disulfide bond" evidence="1">
    <location>
        <begin position="687"/>
        <end position="698"/>
    </location>
</feature>
<feature type="disulfide bond" evidence="1">
    <location>
        <begin position="692"/>
        <end position="707"/>
    </location>
</feature>
<feature type="disulfide bond" evidence="1">
    <location>
        <begin position="709"/>
        <end position="719"/>
    </location>
</feature>
<feature type="disulfide bond" evidence="1">
    <location>
        <begin position="890"/>
        <end position="898"/>
    </location>
</feature>
<feature type="disulfide bond" evidence="1">
    <location>
        <begin position="1059"/>
        <end position="1087"/>
    </location>
</feature>
<feature type="disulfide bond" evidence="1">
    <location>
        <begin position="1094"/>
        <end position="1105"/>
    </location>
</feature>
<feature type="disulfide bond" evidence="1">
    <location>
        <begin position="1099"/>
        <end position="1114"/>
    </location>
</feature>
<feature type="disulfide bond" evidence="1">
    <location>
        <begin position="1116"/>
        <end position="1126"/>
    </location>
</feature>
<feature type="splice variant" id="VSP_058203" description="In isoform 6." evidence="27">
    <location>
        <begin position="1"/>
        <end position="1372"/>
    </location>
</feature>
<feature type="splice variant" id="VSP_003485" description="In isoform 3a and isoform 4a." evidence="26">
    <location>
        <begin position="379"/>
        <end position="393"/>
    </location>
</feature>
<feature type="splice variant" id="VSP_003484" description="In isoform 2a and isoform 5a." evidence="25 28">
    <location>
        <begin position="387"/>
        <end position="393"/>
    </location>
</feature>
<feature type="splice variant" id="VSP_043946" description="In isoform 5a." evidence="29">
    <location>
        <begin position="1247"/>
        <end position="1276"/>
    </location>
</feature>
<feature type="splice variant" id="VSP_058204" description="In isoform 6." evidence="27">
    <original>GKPPTKEPI</original>
    <variation>MDMRWHCEN</variation>
    <location>
        <begin position="1373"/>
        <end position="1381"/>
    </location>
</feature>
<feature type="splice variant" id="VSP_016401" description="In isoform 4a and isoform 6." evidence="26 27">
    <location>
        <begin position="1410"/>
        <end position="1412"/>
    </location>
</feature>
<feature type="mutagenesis site" description="Abolishes heparan sulfate attachment." evidence="22">
    <original>S</original>
    <variation>A</variation>
    <location>
        <position position="1392"/>
    </location>
</feature>
<feature type="strand" evidence="32">
    <location>
        <begin position="283"/>
        <end position="289"/>
    </location>
</feature>
<feature type="strand" evidence="32">
    <location>
        <begin position="291"/>
        <end position="294"/>
    </location>
</feature>
<feature type="strand" evidence="33">
    <location>
        <begin position="297"/>
        <end position="299"/>
    </location>
</feature>
<feature type="strand" evidence="32">
    <location>
        <begin position="304"/>
        <end position="313"/>
    </location>
</feature>
<feature type="strand" evidence="32">
    <location>
        <begin position="319"/>
        <end position="324"/>
    </location>
</feature>
<feature type="strand" evidence="32">
    <location>
        <begin position="326"/>
        <end position="328"/>
    </location>
</feature>
<feature type="strand" evidence="32">
    <location>
        <begin position="330"/>
        <end position="336"/>
    </location>
</feature>
<feature type="strand" evidence="32">
    <location>
        <begin position="339"/>
        <end position="346"/>
    </location>
</feature>
<feature type="strand" evidence="32">
    <location>
        <begin position="349"/>
        <end position="357"/>
    </location>
</feature>
<feature type="strand" evidence="32">
    <location>
        <begin position="364"/>
        <end position="366"/>
    </location>
</feature>
<feature type="strand" evidence="32">
    <location>
        <begin position="368"/>
        <end position="378"/>
    </location>
</feature>
<feature type="strand" evidence="33">
    <location>
        <begin position="384"/>
        <end position="387"/>
    </location>
</feature>
<feature type="strand" evidence="32">
    <location>
        <begin position="394"/>
        <end position="398"/>
    </location>
</feature>
<feature type="strand" evidence="32">
    <location>
        <begin position="401"/>
        <end position="408"/>
    </location>
</feature>
<feature type="strand" evidence="32">
    <location>
        <begin position="421"/>
        <end position="424"/>
    </location>
</feature>
<feature type="strand" evidence="32">
    <location>
        <begin position="442"/>
        <end position="454"/>
    </location>
</feature>
<feature type="strand" evidence="32">
    <location>
        <begin position="456"/>
        <end position="458"/>
    </location>
</feature>
<feature type="helix" evidence="32">
    <location>
        <begin position="459"/>
        <end position="465"/>
    </location>
</feature>
<feature type="strand" evidence="32">
    <location>
        <begin position="470"/>
        <end position="474"/>
    </location>
</feature>
<feature type="strand" evidence="32">
    <location>
        <begin position="477"/>
        <end position="479"/>
    </location>
</feature>
<feature type="strand" evidence="30">
    <location>
        <begin position="1132"/>
        <end position="1145"/>
    </location>
</feature>
<feature type="strand" evidence="30">
    <location>
        <begin position="1154"/>
        <end position="1164"/>
    </location>
</feature>
<feature type="strand" evidence="30">
    <location>
        <begin position="1168"/>
        <end position="1181"/>
    </location>
</feature>
<feature type="strand" evidence="30">
    <location>
        <begin position="1184"/>
        <end position="1190"/>
    </location>
</feature>
<feature type="strand" evidence="30">
    <location>
        <begin position="1193"/>
        <end position="1202"/>
    </location>
</feature>
<feature type="strand" evidence="30">
    <location>
        <begin position="1205"/>
        <end position="1208"/>
    </location>
</feature>
<feature type="strand" evidence="30">
    <location>
        <begin position="1216"/>
        <end position="1218"/>
    </location>
</feature>
<feature type="strand" evidence="30">
    <location>
        <begin position="1220"/>
        <end position="1227"/>
    </location>
</feature>
<feature type="strand" evidence="30">
    <location>
        <begin position="1230"/>
        <end position="1235"/>
    </location>
</feature>
<feature type="strand" evidence="30">
    <location>
        <begin position="1241"/>
        <end position="1243"/>
    </location>
</feature>
<feature type="strand" evidence="31">
    <location>
        <begin position="1265"/>
        <end position="1277"/>
    </location>
</feature>
<feature type="strand" evidence="30">
    <location>
        <begin position="1286"/>
        <end position="1292"/>
    </location>
</feature>
<feature type="helix" evidence="31">
    <location>
        <begin position="1294"/>
        <end position="1296"/>
    </location>
</feature>
<feature type="strand" evidence="30">
    <location>
        <begin position="1302"/>
        <end position="1309"/>
    </location>
</feature>
<feature type="helix" evidence="30">
    <location>
        <begin position="1314"/>
        <end position="1319"/>
    </location>
</feature>
<feature type="strand" evidence="30">
    <location>
        <begin position="1325"/>
        <end position="1333"/>
    </location>
</feature>
<dbReference type="EMBL" id="AB093249">
    <property type="protein sequence ID" value="BAC41433.2"/>
    <property type="status" value="ALT_INIT"/>
    <property type="molecule type" value="mRNA"/>
</dbReference>
<dbReference type="EMBL" id="AC101872">
    <property type="status" value="NOT_ANNOTATED_CDS"/>
    <property type="molecule type" value="Genomic_DNA"/>
</dbReference>
<dbReference type="EMBL" id="AC131326">
    <property type="status" value="NOT_ANNOTATED_CDS"/>
    <property type="molecule type" value="Genomic_DNA"/>
</dbReference>
<dbReference type="EMBL" id="AC151286">
    <property type="status" value="NOT_ANNOTATED_CDS"/>
    <property type="molecule type" value="Genomic_DNA"/>
</dbReference>
<dbReference type="EMBL" id="AC154325">
    <property type="status" value="NOT_ANNOTATED_CDS"/>
    <property type="molecule type" value="Genomic_DNA"/>
</dbReference>
<dbReference type="EMBL" id="AC154599">
    <property type="status" value="NOT_ANNOTATED_CDS"/>
    <property type="molecule type" value="Genomic_DNA"/>
</dbReference>
<dbReference type="EMBL" id="AC167814">
    <property type="status" value="NOT_ANNOTATED_CDS"/>
    <property type="molecule type" value="Genomic_DNA"/>
</dbReference>
<dbReference type="EMBL" id="AC170901">
    <property type="status" value="NOT_ANNOTATED_CDS"/>
    <property type="molecule type" value="Genomic_DNA"/>
</dbReference>
<dbReference type="EMBL" id="AC171209">
    <property type="status" value="NOT_ANNOTATED_CDS"/>
    <property type="molecule type" value="Genomic_DNA"/>
</dbReference>
<dbReference type="EMBL" id="CT025708">
    <property type="status" value="NOT_ANNOTATED_CDS"/>
    <property type="molecule type" value="Genomic_DNA"/>
</dbReference>
<dbReference type="EMBL" id="CT486002">
    <property type="status" value="NOT_ANNOTATED_CDS"/>
    <property type="molecule type" value="Genomic_DNA"/>
</dbReference>
<dbReference type="EMBL" id="BC047146">
    <property type="protein sequence ID" value="AAH47146.1"/>
    <property type="status" value="ALT_SEQ"/>
    <property type="molecule type" value="mRNA"/>
</dbReference>
<dbReference type="EMBL" id="AF387674">
    <property type="protein sequence ID" value="AAK70469.1"/>
    <property type="molecule type" value="Genomic_DNA"/>
</dbReference>
<dbReference type="EMBL" id="AF387674">
    <property type="protein sequence ID" value="AAK70470.1"/>
    <property type="molecule type" value="Genomic_DNA"/>
</dbReference>
<dbReference type="EMBL" id="AF387674">
    <property type="protein sequence ID" value="AAK70471.1"/>
    <property type="molecule type" value="Genomic_DNA"/>
</dbReference>
<dbReference type="EMBL" id="AK017578">
    <property type="protein sequence ID" value="BAB30815.1"/>
    <property type="molecule type" value="mRNA"/>
</dbReference>
<dbReference type="EMBL" id="AJ006802">
    <property type="protein sequence ID" value="CAA07257.1"/>
    <property type="molecule type" value="mRNA"/>
</dbReference>
<dbReference type="CCDS" id="CCDS57113.1">
    <molecule id="Q9CS84-2"/>
</dbReference>
<dbReference type="CCDS" id="CCDS84339.1">
    <molecule id="Q9CS84-6"/>
</dbReference>
<dbReference type="RefSeq" id="NP_001333891.1">
    <molecule id="Q9CS84-6"/>
    <property type="nucleotide sequence ID" value="NM_001346962.2"/>
</dbReference>
<dbReference type="RefSeq" id="NP_064648.3">
    <molecule id="Q9CS84-2"/>
    <property type="nucleotide sequence ID" value="NM_020252.4"/>
</dbReference>
<dbReference type="RefSeq" id="NP_796258.2">
    <property type="nucleotide sequence ID" value="NM_177284.2"/>
</dbReference>
<dbReference type="RefSeq" id="XP_006523874.1">
    <molecule id="Q9CS84-3"/>
    <property type="nucleotide sequence ID" value="XM_006523811.4"/>
</dbReference>
<dbReference type="RefSeq" id="XP_006523875.1">
    <molecule id="Q9CS84-4"/>
    <property type="nucleotide sequence ID" value="XM_006523812.4"/>
</dbReference>
<dbReference type="RefSeq" id="XP_006523879.1">
    <molecule id="Q9CS84-5"/>
    <property type="nucleotide sequence ID" value="XM_006523816.4"/>
</dbReference>
<dbReference type="PDB" id="3BOD">
    <property type="method" value="X-ray"/>
    <property type="resolution" value="1.70 A"/>
    <property type="chains" value="A=1132-1334"/>
</dbReference>
<dbReference type="PDB" id="3MW2">
    <property type="method" value="X-ray"/>
    <property type="resolution" value="2.69 A"/>
    <property type="chains" value="A/B=1132-1334"/>
</dbReference>
<dbReference type="PDB" id="6PNP">
    <property type="method" value="X-ray"/>
    <property type="resolution" value="1.94 A"/>
    <property type="chains" value="A=283-480"/>
</dbReference>
<dbReference type="PDB" id="6PNQ">
    <property type="method" value="X-ray"/>
    <property type="resolution" value="1.95 A"/>
    <property type="chains" value="A=283-480"/>
</dbReference>
<dbReference type="PDBsum" id="3BOD"/>
<dbReference type="PDBsum" id="3MW2"/>
<dbReference type="PDBsum" id="6PNP"/>
<dbReference type="PDBsum" id="6PNQ"/>
<dbReference type="SMR" id="Q9CS84"/>
<dbReference type="BioGRID" id="201851">
    <property type="interactions" value="94"/>
</dbReference>
<dbReference type="FunCoup" id="Q9CS84">
    <property type="interactions" value="972"/>
</dbReference>
<dbReference type="IntAct" id="Q9CS84">
    <property type="interactions" value="8"/>
</dbReference>
<dbReference type="MINT" id="Q9CS84"/>
<dbReference type="STRING" id="10090.ENSMUSP00000125407"/>
<dbReference type="GlyConnect" id="2539">
    <property type="glycosylation" value="4 N-Linked glycans (3 sites)"/>
</dbReference>
<dbReference type="GlyCosmos" id="Q9CS84">
    <property type="glycosylation" value="4 sites, 4 glycans"/>
</dbReference>
<dbReference type="GlyGen" id="Q9CS84">
    <property type="glycosylation" value="6 sites, 7 N-linked glycans (4 sites), 1 O-linked glycan (1 site)"/>
</dbReference>
<dbReference type="iPTMnet" id="Q9CS84"/>
<dbReference type="PhosphoSitePlus" id="Q9CS84"/>
<dbReference type="SwissPalm" id="Q9CS84"/>
<dbReference type="PeptideAtlas" id="Q9CS84"/>
<dbReference type="ProteomicsDB" id="293898">
    <molecule id="Q9CS84-1"/>
</dbReference>
<dbReference type="ProteomicsDB" id="293899">
    <molecule id="Q9CS84-2"/>
</dbReference>
<dbReference type="ProteomicsDB" id="293900">
    <molecule id="Q9CS84-3"/>
</dbReference>
<dbReference type="ProteomicsDB" id="293901">
    <molecule id="Q9CS84-4"/>
</dbReference>
<dbReference type="ProteomicsDB" id="293902">
    <molecule id="Q9CS84-5"/>
</dbReference>
<dbReference type="ProteomicsDB" id="293903">
    <molecule id="Q9CS84-6"/>
</dbReference>
<dbReference type="ABCD" id="Q9CS84">
    <property type="antibodies" value="1 sequenced antibody"/>
</dbReference>
<dbReference type="Antibodypedia" id="30173">
    <property type="antibodies" value="308 antibodies from 36 providers"/>
</dbReference>
<dbReference type="DNASU" id="18189"/>
<dbReference type="Ensembl" id="ENSMUST00000054059.15">
    <molecule id="Q9CS84-3"/>
    <property type="protein sequence ID" value="ENSMUSP00000057294.9"/>
    <property type="gene ID" value="ENSMUSG00000024109.19"/>
</dbReference>
<dbReference type="Ensembl" id="ENSMUST00000072671.14">
    <molecule id="Q9CS84-4"/>
    <property type="protein sequence ID" value="ENSMUSP00000072458.8"/>
    <property type="gene ID" value="ENSMUSG00000024109.19"/>
</dbReference>
<dbReference type="Ensembl" id="ENSMUST00000160844.10">
    <molecule id="Q9CS84-2"/>
    <property type="protein sequence ID" value="ENSMUSP00000125407.4"/>
    <property type="gene ID" value="ENSMUSG00000024109.19"/>
</dbReference>
<dbReference type="Ensembl" id="ENSMUST00000161402.10">
    <molecule id="Q9CS84-1"/>
    <property type="protein sequence ID" value="ENSMUSP00000124116.4"/>
    <property type="gene ID" value="ENSMUSG00000024109.19"/>
</dbReference>
<dbReference type="Ensembl" id="ENSMUST00000174331.8">
    <molecule id="Q9CS84-5"/>
    <property type="protein sequence ID" value="ENSMUSP00000133491.2"/>
    <property type="gene ID" value="ENSMUSG00000024109.19"/>
</dbReference>
<dbReference type="Ensembl" id="ENSMUST00000197268.5">
    <molecule id="Q9CS84-6"/>
    <property type="protein sequence ID" value="ENSMUSP00000142815.2"/>
    <property type="gene ID" value="ENSMUSG00000024109.19"/>
</dbReference>
<dbReference type="GeneID" id="18189"/>
<dbReference type="UCSC" id="uc008dvz.2">
    <molecule id="Q9CS84-2"/>
    <property type="organism name" value="mouse"/>
</dbReference>
<dbReference type="UCSC" id="uc008dwa.2">
    <molecule id="Q9CS84-4"/>
    <property type="organism name" value="mouse"/>
</dbReference>
<dbReference type="AGR" id="MGI:1096391"/>
<dbReference type="CTD" id="9378"/>
<dbReference type="MGI" id="MGI:1096391">
    <property type="gene designation" value="Nrxn1"/>
</dbReference>
<dbReference type="VEuPathDB" id="HostDB:ENSMUSG00000024109"/>
<dbReference type="GeneTree" id="ENSGT00940000154292"/>
<dbReference type="HOGENOM" id="CLU_001710_0_1_1"/>
<dbReference type="InParanoid" id="Q9CS84"/>
<dbReference type="OMA" id="IKFSLQC"/>
<dbReference type="OrthoDB" id="6275838at2759"/>
<dbReference type="PhylomeDB" id="Q9CS84"/>
<dbReference type="Reactome" id="R-MMU-6794361">
    <property type="pathway name" value="Neurexins and neuroligins"/>
</dbReference>
<dbReference type="BioGRID-ORCS" id="18189">
    <property type="hits" value="2 hits in 78 CRISPR screens"/>
</dbReference>
<dbReference type="CD-CODE" id="CE726F99">
    <property type="entry name" value="Postsynaptic density"/>
</dbReference>
<dbReference type="ChiTaRS" id="Nrxn1">
    <property type="organism name" value="mouse"/>
</dbReference>
<dbReference type="EvolutionaryTrace" id="Q9CS84"/>
<dbReference type="Proteomes" id="UP000000589">
    <property type="component" value="Chromosome 17"/>
</dbReference>
<dbReference type="RNAct" id="Q9CS84">
    <property type="molecule type" value="protein"/>
</dbReference>
<dbReference type="Bgee" id="ENSMUSG00000024109">
    <property type="expression patterns" value="Expressed in medial dorsal nucleus of thalamus and 180 other cell types or tissues"/>
</dbReference>
<dbReference type="ExpressionAtlas" id="Q9CS84">
    <property type="expression patterns" value="baseline and differential"/>
</dbReference>
<dbReference type="GO" id="GO:0042995">
    <property type="term" value="C:cell projection"/>
    <property type="evidence" value="ECO:0007669"/>
    <property type="project" value="UniProtKB-KW"/>
</dbReference>
<dbReference type="GO" id="GO:0009986">
    <property type="term" value="C:cell surface"/>
    <property type="evidence" value="ECO:0000314"/>
    <property type="project" value="BHF-UCL"/>
</dbReference>
<dbReference type="GO" id="GO:0005783">
    <property type="term" value="C:endoplasmic reticulum"/>
    <property type="evidence" value="ECO:0000314"/>
    <property type="project" value="BHF-UCL"/>
</dbReference>
<dbReference type="GO" id="GO:0098982">
    <property type="term" value="C:GABA-ergic synapse"/>
    <property type="evidence" value="ECO:0000314"/>
    <property type="project" value="SynGO"/>
</dbReference>
<dbReference type="GO" id="GO:0098978">
    <property type="term" value="C:glutamatergic synapse"/>
    <property type="evidence" value="ECO:0000314"/>
    <property type="project" value="SynGO"/>
</dbReference>
<dbReference type="GO" id="GO:0043025">
    <property type="term" value="C:neuronal cell body"/>
    <property type="evidence" value="ECO:0000314"/>
    <property type="project" value="BHF-UCL"/>
</dbReference>
<dbReference type="GO" id="GO:0031965">
    <property type="term" value="C:nuclear membrane"/>
    <property type="evidence" value="ECO:0000314"/>
    <property type="project" value="BHF-UCL"/>
</dbReference>
<dbReference type="GO" id="GO:0005886">
    <property type="term" value="C:plasma membrane"/>
    <property type="evidence" value="ECO:0000250"/>
    <property type="project" value="BHF-UCL"/>
</dbReference>
<dbReference type="GO" id="GO:0048787">
    <property type="term" value="C:presynaptic active zone membrane"/>
    <property type="evidence" value="ECO:0000314"/>
    <property type="project" value="SynGO"/>
</dbReference>
<dbReference type="GO" id="GO:0042734">
    <property type="term" value="C:presynaptic membrane"/>
    <property type="evidence" value="ECO:0000314"/>
    <property type="project" value="BHF-UCL"/>
</dbReference>
<dbReference type="GO" id="GO:0032991">
    <property type="term" value="C:protein-containing complex"/>
    <property type="evidence" value="ECO:0000353"/>
    <property type="project" value="MGI"/>
</dbReference>
<dbReference type="GO" id="GO:0098685">
    <property type="term" value="C:Schaffer collateral - CA1 synapse"/>
    <property type="evidence" value="ECO:0000314"/>
    <property type="project" value="SynGO"/>
</dbReference>
<dbReference type="GO" id="GO:0098820">
    <property type="term" value="C:trans-synaptic protein complex"/>
    <property type="evidence" value="ECO:0000314"/>
    <property type="project" value="UniProt"/>
</dbReference>
<dbReference type="GO" id="GO:0031982">
    <property type="term" value="C:vesicle"/>
    <property type="evidence" value="ECO:0000314"/>
    <property type="project" value="BHF-UCL"/>
</dbReference>
<dbReference type="GO" id="GO:0033130">
    <property type="term" value="F:acetylcholine receptor binding"/>
    <property type="evidence" value="ECO:0000314"/>
    <property type="project" value="MGI"/>
</dbReference>
<dbReference type="GO" id="GO:0005246">
    <property type="term" value="F:calcium channel regulator activity"/>
    <property type="evidence" value="ECO:0000316"/>
    <property type="project" value="MGI"/>
</dbReference>
<dbReference type="GO" id="GO:0005509">
    <property type="term" value="F:calcium ion binding"/>
    <property type="evidence" value="ECO:0000250"/>
    <property type="project" value="BHF-UCL"/>
</dbReference>
<dbReference type="GO" id="GO:0050839">
    <property type="term" value="F:cell adhesion molecule binding"/>
    <property type="evidence" value="ECO:0000353"/>
    <property type="project" value="BHF-UCL"/>
</dbReference>
<dbReference type="GO" id="GO:0097109">
    <property type="term" value="F:neuroligin family protein binding"/>
    <property type="evidence" value="ECO:0000353"/>
    <property type="project" value="BHF-UCL"/>
</dbReference>
<dbReference type="GO" id="GO:0030534">
    <property type="term" value="P:adult behavior"/>
    <property type="evidence" value="ECO:0000315"/>
    <property type="project" value="BHF-UCL"/>
</dbReference>
<dbReference type="GO" id="GO:0007268">
    <property type="term" value="P:chemical synaptic transmission"/>
    <property type="evidence" value="ECO:0000316"/>
    <property type="project" value="MGI"/>
</dbReference>
<dbReference type="GO" id="GO:0097116">
    <property type="term" value="P:gephyrin clustering involved in postsynaptic density assembly"/>
    <property type="evidence" value="ECO:0000314"/>
    <property type="project" value="BHF-UCL"/>
</dbReference>
<dbReference type="GO" id="GO:0007612">
    <property type="term" value="P:learning"/>
    <property type="evidence" value="ECO:0000315"/>
    <property type="project" value="BHF-UCL"/>
</dbReference>
<dbReference type="GO" id="GO:0097118">
    <property type="term" value="P:neuroligin clustering involved in postsynaptic membrane assembly"/>
    <property type="evidence" value="ECO:0000314"/>
    <property type="project" value="BHF-UCL"/>
</dbReference>
<dbReference type="GO" id="GO:0050885">
    <property type="term" value="P:neuromuscular process controlling balance"/>
    <property type="evidence" value="ECO:0000315"/>
    <property type="project" value="BHF-UCL"/>
</dbReference>
<dbReference type="GO" id="GO:0007269">
    <property type="term" value="P:neurotransmitter secretion"/>
    <property type="evidence" value="ECO:0000316"/>
    <property type="project" value="MGI"/>
</dbReference>
<dbReference type="GO" id="GO:2000463">
    <property type="term" value="P:positive regulation of excitatory postsynaptic potential"/>
    <property type="evidence" value="ECO:0000315"/>
    <property type="project" value="BHF-UCL"/>
</dbReference>
<dbReference type="GO" id="GO:0051965">
    <property type="term" value="P:positive regulation of synapse assembly"/>
    <property type="evidence" value="ECO:0000316"/>
    <property type="project" value="MGI"/>
</dbReference>
<dbReference type="GO" id="GO:0090129">
    <property type="term" value="P:positive regulation of synapse maturation"/>
    <property type="evidence" value="ECO:0000314"/>
    <property type="project" value="MGI"/>
</dbReference>
<dbReference type="GO" id="GO:0051968">
    <property type="term" value="P:positive regulation of synaptic transmission, glutamatergic"/>
    <property type="evidence" value="ECO:0000315"/>
    <property type="project" value="BHF-UCL"/>
</dbReference>
<dbReference type="GO" id="GO:0097119">
    <property type="term" value="P:postsynaptic density protein 95 clustering"/>
    <property type="evidence" value="ECO:0000314"/>
    <property type="project" value="BHF-UCL"/>
</dbReference>
<dbReference type="GO" id="GO:0097104">
    <property type="term" value="P:postsynaptic membrane assembly"/>
    <property type="evidence" value="ECO:0000314"/>
    <property type="project" value="BHF-UCL"/>
</dbReference>
<dbReference type="GO" id="GO:0060134">
    <property type="term" value="P:prepulse inhibition"/>
    <property type="evidence" value="ECO:0000315"/>
    <property type="project" value="BHF-UCL"/>
</dbReference>
<dbReference type="GO" id="GO:0099054">
    <property type="term" value="P:presynapse assembly"/>
    <property type="evidence" value="ECO:0000314"/>
    <property type="project" value="SynGO"/>
</dbReference>
<dbReference type="GO" id="GO:2000821">
    <property type="term" value="P:regulation of grooming behavior"/>
    <property type="evidence" value="ECO:0000315"/>
    <property type="project" value="BHF-UCL"/>
</dbReference>
<dbReference type="GO" id="GO:0061178">
    <property type="term" value="P:regulation of insulin secretion involved in cellular response to glucose stimulus"/>
    <property type="evidence" value="ECO:0000315"/>
    <property type="project" value="MGI"/>
</dbReference>
<dbReference type="GO" id="GO:0099151">
    <property type="term" value="P:regulation of postsynaptic density assembly"/>
    <property type="evidence" value="ECO:0000314"/>
    <property type="project" value="SynGO"/>
</dbReference>
<dbReference type="GO" id="GO:0099150">
    <property type="term" value="P:regulation of postsynaptic specialization assembly"/>
    <property type="evidence" value="ECO:0000314"/>
    <property type="project" value="SynGO"/>
</dbReference>
<dbReference type="GO" id="GO:1905606">
    <property type="term" value="P:regulation of presynapse assembly"/>
    <property type="evidence" value="ECO:0000314"/>
    <property type="project" value="SynGO"/>
</dbReference>
<dbReference type="GO" id="GO:0098693">
    <property type="term" value="P:regulation of synaptic vesicle cycle"/>
    <property type="evidence" value="ECO:0000314"/>
    <property type="project" value="SynGO"/>
</dbReference>
<dbReference type="GO" id="GO:0150036">
    <property type="term" value="P:regulation of trans-synaptic signaling by endocannabinoid, modulating synaptic transmission"/>
    <property type="evidence" value="ECO:0000314"/>
    <property type="project" value="SynGO"/>
</dbReference>
<dbReference type="GO" id="GO:0007416">
    <property type="term" value="P:synapse assembly"/>
    <property type="evidence" value="ECO:0000314"/>
    <property type="project" value="SynGO"/>
</dbReference>
<dbReference type="GO" id="GO:0099560">
    <property type="term" value="P:synaptic membrane adhesion"/>
    <property type="evidence" value="ECO:0000314"/>
    <property type="project" value="SynGO"/>
</dbReference>
<dbReference type="GO" id="GO:0099550">
    <property type="term" value="P:trans-synaptic signaling, modulating synaptic transmission"/>
    <property type="evidence" value="ECO:0000314"/>
    <property type="project" value="SynGO"/>
</dbReference>
<dbReference type="GO" id="GO:0006904">
    <property type="term" value="P:vesicle docking involved in exocytosis"/>
    <property type="evidence" value="ECO:0000266"/>
    <property type="project" value="MGI"/>
</dbReference>
<dbReference type="CDD" id="cd00054">
    <property type="entry name" value="EGF_CA"/>
    <property type="match status" value="1"/>
</dbReference>
<dbReference type="CDD" id="cd00110">
    <property type="entry name" value="LamG"/>
    <property type="match status" value="6"/>
</dbReference>
<dbReference type="FunFam" id="2.10.25.10:FF:000015">
    <property type="entry name" value="neurexin-1 isoform X1"/>
    <property type="match status" value="1"/>
</dbReference>
<dbReference type="FunFam" id="2.10.25.10:FF:000029">
    <property type="entry name" value="neurexin-1 isoform X1"/>
    <property type="match status" value="1"/>
</dbReference>
<dbReference type="FunFam" id="2.10.25.10:FF:000167">
    <property type="entry name" value="neurexin-1 isoform X1"/>
    <property type="match status" value="1"/>
</dbReference>
<dbReference type="FunFam" id="2.60.120.200:FF:000001">
    <property type="entry name" value="neurexin-1 isoform X1"/>
    <property type="match status" value="1"/>
</dbReference>
<dbReference type="FunFam" id="2.60.120.200:FF:000003">
    <property type="entry name" value="neurexin-1 isoform X1"/>
    <property type="match status" value="1"/>
</dbReference>
<dbReference type="FunFam" id="2.60.120.200:FF:000004">
    <property type="entry name" value="neurexin-1 isoform X1"/>
    <property type="match status" value="1"/>
</dbReference>
<dbReference type="FunFam" id="2.60.120.200:FF:000005">
    <property type="entry name" value="neurexin-1 isoform X1"/>
    <property type="match status" value="1"/>
</dbReference>
<dbReference type="FunFam" id="2.60.120.200:FF:000007">
    <property type="entry name" value="neurexin-1 isoform X1"/>
    <property type="match status" value="1"/>
</dbReference>
<dbReference type="FunFam" id="2.60.120.200:FF:000014">
    <property type="entry name" value="neurexin-1 isoform X1"/>
    <property type="match status" value="1"/>
</dbReference>
<dbReference type="Gene3D" id="2.60.120.200">
    <property type="match status" value="6"/>
</dbReference>
<dbReference type="Gene3D" id="2.10.25.10">
    <property type="entry name" value="Laminin"/>
    <property type="match status" value="3"/>
</dbReference>
<dbReference type="InterPro" id="IPR013320">
    <property type="entry name" value="ConA-like_dom_sf"/>
</dbReference>
<dbReference type="InterPro" id="IPR000742">
    <property type="entry name" value="EGF-like_dom"/>
</dbReference>
<dbReference type="InterPro" id="IPR000152">
    <property type="entry name" value="EGF-type_Asp/Asn_hydroxyl_site"/>
</dbReference>
<dbReference type="InterPro" id="IPR001791">
    <property type="entry name" value="Laminin_G"/>
</dbReference>
<dbReference type="InterPro" id="IPR003585">
    <property type="entry name" value="Neurexin-like"/>
</dbReference>
<dbReference type="InterPro" id="IPR050372">
    <property type="entry name" value="Neurexin-related_CASP"/>
</dbReference>
<dbReference type="PANTHER" id="PTHR15036">
    <property type="entry name" value="PIKACHURIN-LIKE PROTEIN"/>
    <property type="match status" value="1"/>
</dbReference>
<dbReference type="PANTHER" id="PTHR15036:SF85">
    <property type="entry name" value="SP2353, ISOFORM A"/>
    <property type="match status" value="1"/>
</dbReference>
<dbReference type="Pfam" id="PF00008">
    <property type="entry name" value="EGF"/>
    <property type="match status" value="1"/>
</dbReference>
<dbReference type="Pfam" id="PF02210">
    <property type="entry name" value="Laminin_G_2"/>
    <property type="match status" value="6"/>
</dbReference>
<dbReference type="SMART" id="SM00294">
    <property type="entry name" value="4.1m"/>
    <property type="match status" value="1"/>
</dbReference>
<dbReference type="SMART" id="SM00181">
    <property type="entry name" value="EGF"/>
    <property type="match status" value="3"/>
</dbReference>
<dbReference type="SMART" id="SM00282">
    <property type="entry name" value="LamG"/>
    <property type="match status" value="6"/>
</dbReference>
<dbReference type="SUPFAM" id="SSF49899">
    <property type="entry name" value="Concanavalin A-like lectins/glucanases"/>
    <property type="match status" value="6"/>
</dbReference>
<dbReference type="PROSITE" id="PS00010">
    <property type="entry name" value="ASX_HYDROXYL"/>
    <property type="match status" value="1"/>
</dbReference>
<dbReference type="PROSITE" id="PS50026">
    <property type="entry name" value="EGF_3"/>
    <property type="match status" value="3"/>
</dbReference>
<dbReference type="PROSITE" id="PS50025">
    <property type="entry name" value="LAM_G_DOMAIN"/>
    <property type="match status" value="6"/>
</dbReference>
<proteinExistence type="evidence at protein level"/>
<protein>
    <recommendedName>
        <fullName>Neurexin-1</fullName>
    </recommendedName>
    <alternativeName>
        <fullName>Neurexin I-alpha</fullName>
    </alternativeName>
    <alternativeName>
        <fullName>Neurexin-1-alpha</fullName>
    </alternativeName>
</protein>
<keyword id="KW-0002">3D-structure</keyword>
<keyword id="KW-0877">Alternative promoter usage</keyword>
<keyword id="KW-0025">Alternative splicing</keyword>
<keyword id="KW-0106">Calcium</keyword>
<keyword id="KW-0130">Cell adhesion</keyword>
<keyword id="KW-1003">Cell membrane</keyword>
<keyword id="KW-0966">Cell projection</keyword>
<keyword id="KW-1015">Disulfide bond</keyword>
<keyword id="KW-0245">EGF-like domain</keyword>
<keyword id="KW-0325">Glycoprotein</keyword>
<keyword id="KW-0357">Heparan sulfate</keyword>
<keyword id="KW-0472">Membrane</keyword>
<keyword id="KW-0479">Metal-binding</keyword>
<keyword id="KW-0654">Proteoglycan</keyword>
<keyword id="KW-1185">Reference proteome</keyword>
<keyword id="KW-0677">Repeat</keyword>
<keyword id="KW-0732">Signal</keyword>
<keyword id="KW-0770">Synapse</keyword>
<keyword id="KW-0812">Transmembrane</keyword>
<keyword id="KW-1133">Transmembrane helix</keyword>
<sequence>MGTALVQRGGCCLLCLSLLLLGCWAELGSGLEFPGAEGQWTRFPKWNACCESEMSFQLKTRSARGLVLYFDDEGFCDFLELILTRGGRLQLSFSIFCAEPATLLADTPVNDGAWHSVRIRRQFRNTTLYIDRAEAKWVEVKSKRRDMTVFSGLFVGGLPPELRAAALKLTLASVREREPFKGWIRDVRVNSSQALPVDGGEVKLDDEPPNSGGGSPCEAGEEGEGGVCLNGGVCSVVDDQAVCDCSRTGFRGKDCSQEDNNVEGLAHLMMGDQGKSKGKEEYIATFKGSEYFCYDLSQNPIQSSSDEITLSFKTLQRNGLMLHTGKSADYVNLALKNGAVSLVINLGSGAFEALVEPVNGKFNDNAWHDVKVTRNLRQHSGIGHAMVNKLHCSVTISVDGILTTTGYTQEDYTMLGSDDFFYVGGSPSTADLPGSPVSNNFMGCLKEVVYKNNDVRLELSRLAKQGDPKMKIHGVVAFKCENVATLDPITFETPESFISLPKWNAKKTGSISFDFRTTEPNGLILFSHGKPRHQKDAKHPQMIKVDFFAIEMLDGHLYLLLDMGSGTIKIKALQKKVNDGEWYHVDFQRDGRSGTISVNTLRTPYTAPGESEILDLDDELYLGGLPENKAGLVFPTEVWTALLNYGYVGCIRDLFIDGQSKDIRQMAEIQSTAGVKPSCSKETAKPCLSNPCKNNGMCRDGWNRYVCDCSGTGYLGRSCEREATVLSYDGSMFMKIQLPVVMHTEAEDVSLRFRSQRAYGILMATTSRDSADTLRLELDAGRVKLTVNLDCIRINCNSSKGPETLFAGYNLNDNEWHTVRVVRRGKSLKLTVDDQQAMTGQMAGDHTRLEFHNIETGIITERRYLSSVPSNFIGHLQSLTFNGMAYIDLCKNGDIDYCELNARFGFRNIIADPVTFKTKSSYVALATLQAYTSMHLFFQFKTTSLDGLILYNSGDGNDFIVVELVKGYLHYVFDLGNGANLIKGSSNKPLNDNQWHNVMISRDTSNLHTVKIDTKITTQITAGARNLDLKSDLYIGGVAKETYKSLPKLVHAKEGFQGCLASVDLNGRLPDLISDALFCNGQIERGCEGPSTTCQEDSCSNQGVCLQQWDGFSCDCSMTSFSGPLCNDPGTTYIFSKGGGQITYKWPPNDRPSTRADRLAIGFSTVQKEAVLVRVDSSSGLGDYLELHIHQGKIGVKFNVGTDDIAIEESNAIINDGKYHVVRFTRSGGNATLQVDSWPVIERYPAGNNDNERLAIARQRIPYRLGRVVDEWLLDKGRQLTIFNSQATIIIGGKEQGQPFQGQLSGLYYNGLKVLNMAAENDANIAIVGNVRLVGEVPSSMTTESTATAMQSEMSTSIMETTTTLATSTARRGKPPTKEPISQTTDDILVASAECPSDDEDIDPCEPSSGGLANPTRVGGREPYPGSAEVIRESSSTTGMVVGIVAAAALCILILLYAMYKYRNRDEGSYHVDESRNYISNSAQSNGAVVKEKQPSSAKSANKNKKNKDKEYYV</sequence>